<accession>P58254</accession>
<comment type="function">
    <text evidence="1">Can catalyze the hydrolysis of ATP in the presence of single-stranded DNA, the ATP-dependent uptake of single-stranded DNA by duplex DNA, and the ATP-dependent hybridization of homologous single-stranded DNAs. It interacts with LexA causing its activation and leading to its autocatalytic cleavage.</text>
</comment>
<comment type="subcellular location">
    <subcellularLocation>
        <location evidence="1">Cytoplasm</location>
    </subcellularLocation>
</comment>
<comment type="similarity">
    <text evidence="1">Belongs to the RecA family.</text>
</comment>
<dbReference type="EMBL" id="AE001437">
    <property type="protein sequence ID" value="AAK79780.1"/>
    <property type="molecule type" value="Genomic_DNA"/>
</dbReference>
<dbReference type="PIR" id="A97124">
    <property type="entry name" value="A97124"/>
</dbReference>
<dbReference type="RefSeq" id="NP_348440.1">
    <property type="nucleotide sequence ID" value="NC_003030.1"/>
</dbReference>
<dbReference type="RefSeq" id="WP_010965121.1">
    <property type="nucleotide sequence ID" value="NC_003030.1"/>
</dbReference>
<dbReference type="SMR" id="P58254"/>
<dbReference type="STRING" id="272562.CA_C1815"/>
<dbReference type="GeneID" id="44998309"/>
<dbReference type="KEGG" id="cac:CA_C1815"/>
<dbReference type="PATRIC" id="fig|272562.8.peg.2021"/>
<dbReference type="eggNOG" id="COG0468">
    <property type="taxonomic scope" value="Bacteria"/>
</dbReference>
<dbReference type="HOGENOM" id="CLU_040469_3_2_9"/>
<dbReference type="OrthoDB" id="9776733at2"/>
<dbReference type="Proteomes" id="UP000000814">
    <property type="component" value="Chromosome"/>
</dbReference>
<dbReference type="GO" id="GO:0005829">
    <property type="term" value="C:cytosol"/>
    <property type="evidence" value="ECO:0007669"/>
    <property type="project" value="TreeGrafter"/>
</dbReference>
<dbReference type="GO" id="GO:0005524">
    <property type="term" value="F:ATP binding"/>
    <property type="evidence" value="ECO:0007669"/>
    <property type="project" value="UniProtKB-UniRule"/>
</dbReference>
<dbReference type="GO" id="GO:0016887">
    <property type="term" value="F:ATP hydrolysis activity"/>
    <property type="evidence" value="ECO:0007669"/>
    <property type="project" value="InterPro"/>
</dbReference>
<dbReference type="GO" id="GO:0140664">
    <property type="term" value="F:ATP-dependent DNA damage sensor activity"/>
    <property type="evidence" value="ECO:0007669"/>
    <property type="project" value="InterPro"/>
</dbReference>
<dbReference type="GO" id="GO:0003684">
    <property type="term" value="F:damaged DNA binding"/>
    <property type="evidence" value="ECO:0007669"/>
    <property type="project" value="UniProtKB-UniRule"/>
</dbReference>
<dbReference type="GO" id="GO:0003697">
    <property type="term" value="F:single-stranded DNA binding"/>
    <property type="evidence" value="ECO:0007669"/>
    <property type="project" value="UniProtKB-UniRule"/>
</dbReference>
<dbReference type="GO" id="GO:0006310">
    <property type="term" value="P:DNA recombination"/>
    <property type="evidence" value="ECO:0007669"/>
    <property type="project" value="UniProtKB-UniRule"/>
</dbReference>
<dbReference type="GO" id="GO:0006281">
    <property type="term" value="P:DNA repair"/>
    <property type="evidence" value="ECO:0007669"/>
    <property type="project" value="UniProtKB-UniRule"/>
</dbReference>
<dbReference type="GO" id="GO:0009432">
    <property type="term" value="P:SOS response"/>
    <property type="evidence" value="ECO:0007669"/>
    <property type="project" value="UniProtKB-UniRule"/>
</dbReference>
<dbReference type="CDD" id="cd00983">
    <property type="entry name" value="RecA"/>
    <property type="match status" value="1"/>
</dbReference>
<dbReference type="FunFam" id="3.40.50.300:FF:000087">
    <property type="entry name" value="Recombinase RecA"/>
    <property type="match status" value="1"/>
</dbReference>
<dbReference type="Gene3D" id="3.40.50.300">
    <property type="entry name" value="P-loop containing nucleotide triphosphate hydrolases"/>
    <property type="match status" value="1"/>
</dbReference>
<dbReference type="HAMAP" id="MF_00268">
    <property type="entry name" value="RecA"/>
    <property type="match status" value="1"/>
</dbReference>
<dbReference type="InterPro" id="IPR003593">
    <property type="entry name" value="AAA+_ATPase"/>
</dbReference>
<dbReference type="InterPro" id="IPR013765">
    <property type="entry name" value="DNA_recomb/repair_RecA"/>
</dbReference>
<dbReference type="InterPro" id="IPR020584">
    <property type="entry name" value="DNA_recomb/repair_RecA_CS"/>
</dbReference>
<dbReference type="InterPro" id="IPR027417">
    <property type="entry name" value="P-loop_NTPase"/>
</dbReference>
<dbReference type="InterPro" id="IPR049261">
    <property type="entry name" value="RecA-like_C"/>
</dbReference>
<dbReference type="InterPro" id="IPR049428">
    <property type="entry name" value="RecA-like_N"/>
</dbReference>
<dbReference type="InterPro" id="IPR020588">
    <property type="entry name" value="RecA_ATP-bd"/>
</dbReference>
<dbReference type="InterPro" id="IPR023400">
    <property type="entry name" value="RecA_C_sf"/>
</dbReference>
<dbReference type="InterPro" id="IPR020587">
    <property type="entry name" value="RecA_monomer-monomer_interface"/>
</dbReference>
<dbReference type="NCBIfam" id="TIGR02012">
    <property type="entry name" value="tigrfam_recA"/>
    <property type="match status" value="1"/>
</dbReference>
<dbReference type="PANTHER" id="PTHR45900:SF1">
    <property type="entry name" value="MITOCHONDRIAL DNA REPAIR PROTEIN RECA HOMOLOG-RELATED"/>
    <property type="match status" value="1"/>
</dbReference>
<dbReference type="PANTHER" id="PTHR45900">
    <property type="entry name" value="RECA"/>
    <property type="match status" value="1"/>
</dbReference>
<dbReference type="Pfam" id="PF00154">
    <property type="entry name" value="RecA"/>
    <property type="match status" value="1"/>
</dbReference>
<dbReference type="Pfam" id="PF21096">
    <property type="entry name" value="RecA_C"/>
    <property type="match status" value="1"/>
</dbReference>
<dbReference type="PRINTS" id="PR00142">
    <property type="entry name" value="RECA"/>
</dbReference>
<dbReference type="SMART" id="SM00382">
    <property type="entry name" value="AAA"/>
    <property type="match status" value="1"/>
</dbReference>
<dbReference type="SUPFAM" id="SSF52540">
    <property type="entry name" value="P-loop containing nucleoside triphosphate hydrolases"/>
    <property type="match status" value="1"/>
</dbReference>
<dbReference type="SUPFAM" id="SSF54752">
    <property type="entry name" value="RecA protein, C-terminal domain"/>
    <property type="match status" value="1"/>
</dbReference>
<dbReference type="PROSITE" id="PS00321">
    <property type="entry name" value="RECA_1"/>
    <property type="match status" value="1"/>
</dbReference>
<dbReference type="PROSITE" id="PS50162">
    <property type="entry name" value="RECA_2"/>
    <property type="match status" value="1"/>
</dbReference>
<dbReference type="PROSITE" id="PS50163">
    <property type="entry name" value="RECA_3"/>
    <property type="match status" value="1"/>
</dbReference>
<keyword id="KW-0067">ATP-binding</keyword>
<keyword id="KW-0963">Cytoplasm</keyword>
<keyword id="KW-0227">DNA damage</keyword>
<keyword id="KW-0233">DNA recombination</keyword>
<keyword id="KW-0234">DNA repair</keyword>
<keyword id="KW-0238">DNA-binding</keyword>
<keyword id="KW-0547">Nucleotide-binding</keyword>
<keyword id="KW-1185">Reference proteome</keyword>
<keyword id="KW-0742">SOS response</keyword>
<organism>
    <name type="scientific">Clostridium acetobutylicum (strain ATCC 824 / DSM 792 / JCM 1419 / IAM 19013 / LMG 5710 / NBRC 13948 / NRRL B-527 / VKM B-1787 / 2291 / W)</name>
    <dbReference type="NCBI Taxonomy" id="272562"/>
    <lineage>
        <taxon>Bacteria</taxon>
        <taxon>Bacillati</taxon>
        <taxon>Bacillota</taxon>
        <taxon>Clostridia</taxon>
        <taxon>Eubacteriales</taxon>
        <taxon>Clostridiaceae</taxon>
        <taxon>Clostridium</taxon>
    </lineage>
</organism>
<reference key="1">
    <citation type="journal article" date="2001" name="J. Bacteriol.">
        <title>Genome sequence and comparative analysis of the solvent-producing bacterium Clostridium acetobutylicum.</title>
        <authorList>
            <person name="Noelling J."/>
            <person name="Breton G."/>
            <person name="Omelchenko M.V."/>
            <person name="Makarova K.S."/>
            <person name="Zeng Q."/>
            <person name="Gibson R."/>
            <person name="Lee H.M."/>
            <person name="Dubois J."/>
            <person name="Qiu D."/>
            <person name="Hitti J."/>
            <person name="Wolf Y.I."/>
            <person name="Tatusov R.L."/>
            <person name="Sabathe F."/>
            <person name="Doucette-Stamm L.A."/>
            <person name="Soucaille P."/>
            <person name="Daly M.J."/>
            <person name="Bennett G.N."/>
            <person name="Koonin E.V."/>
            <person name="Smith D.R."/>
        </authorList>
    </citation>
    <scope>NUCLEOTIDE SEQUENCE [LARGE SCALE GENOMIC DNA]</scope>
    <source>
        <strain>ATCC 824 / DSM 792 / JCM 1419 / IAM 19013 / LMG 5710 / NBRC 13948 / NRRL B-527 / VKM B-1787 / 2291 / W</strain>
    </source>
</reference>
<sequence>MDNEKLKAIDAAMSQIEKQFGKGAIMKLGEQDILNIDAISTGCLSLDIALGIGGVPRGRVVEIYGPESSGKTTVALHILAEAQKKGGAAAFIDAEHALDPQYARALGVDIDNLVVSQPDTGEQALEIAEALVRSGAIDVIVVDSVAALVPKAEIEGEMGDSHVGLQARLMSQALRKLTGSINKSKCIAIFINQLREKVGIMFGNPETTPGGRALKFYASVRMDIRKIDTIKQGEEMIGNRVRVKVVKNKVAPPFKQAEFDIMYNEGISREGNIVDVGVKENIIQKSGAWFSYGDIRLGQGRENAKLFFKENIDIRSEVENKIREKYDLPIQKVKNEKPKIEKGTENNTK</sequence>
<evidence type="ECO:0000255" key="1">
    <source>
        <dbReference type="HAMAP-Rule" id="MF_00268"/>
    </source>
</evidence>
<name>RECA_CLOAB</name>
<gene>
    <name evidence="1" type="primary">recA</name>
    <name type="ordered locus">CA_C1815</name>
</gene>
<feature type="chain" id="PRO_0000122690" description="Protein RecA">
    <location>
        <begin position="1"/>
        <end position="349"/>
    </location>
</feature>
<feature type="binding site" evidence="1">
    <location>
        <begin position="65"/>
        <end position="72"/>
    </location>
    <ligand>
        <name>ATP</name>
        <dbReference type="ChEBI" id="CHEBI:30616"/>
    </ligand>
</feature>
<protein>
    <recommendedName>
        <fullName evidence="1">Protein RecA</fullName>
    </recommendedName>
    <alternativeName>
        <fullName evidence="1">Recombinase A</fullName>
    </alternativeName>
</protein>
<proteinExistence type="inferred from homology"/>